<name>RL14_SHEPC</name>
<keyword id="KW-0687">Ribonucleoprotein</keyword>
<keyword id="KW-0689">Ribosomal protein</keyword>
<keyword id="KW-0694">RNA-binding</keyword>
<keyword id="KW-0699">rRNA-binding</keyword>
<evidence type="ECO:0000255" key="1">
    <source>
        <dbReference type="HAMAP-Rule" id="MF_01367"/>
    </source>
</evidence>
<evidence type="ECO:0000305" key="2"/>
<protein>
    <recommendedName>
        <fullName evidence="1">Large ribosomal subunit protein uL14</fullName>
    </recommendedName>
    <alternativeName>
        <fullName evidence="2">50S ribosomal protein L14</fullName>
    </alternativeName>
</protein>
<comment type="function">
    <text evidence="1">Binds to 23S rRNA. Forms part of two intersubunit bridges in the 70S ribosome.</text>
</comment>
<comment type="subunit">
    <text evidence="1">Part of the 50S ribosomal subunit. Forms a cluster with proteins L3 and L19. In the 70S ribosome, L14 and L19 interact and together make contacts with the 16S rRNA in bridges B5 and B8.</text>
</comment>
<comment type="similarity">
    <text evidence="1">Belongs to the universal ribosomal protein uL14 family.</text>
</comment>
<organism>
    <name type="scientific">Shewanella putrefaciens (strain CN-32 / ATCC BAA-453)</name>
    <dbReference type="NCBI Taxonomy" id="319224"/>
    <lineage>
        <taxon>Bacteria</taxon>
        <taxon>Pseudomonadati</taxon>
        <taxon>Pseudomonadota</taxon>
        <taxon>Gammaproteobacteria</taxon>
        <taxon>Alteromonadales</taxon>
        <taxon>Shewanellaceae</taxon>
        <taxon>Shewanella</taxon>
    </lineage>
</organism>
<gene>
    <name evidence="1" type="primary">rplN</name>
    <name type="ordered locus">Sputcn32_3749</name>
</gene>
<sequence length="122" mass="13456">MIQMQSTLDVACNSGARRVQCIKVLGGSHRRYAGIGDIIKVSVKEAIPRAKAKKGDVYNAVVVRTKKGVRRPDGSVIRFDRNAAVLLNNNLQPIGTRIFGPVTRELRNEQFMKIVSLAPEVL</sequence>
<feature type="chain" id="PRO_1000055699" description="Large ribosomal subunit protein uL14">
    <location>
        <begin position="1"/>
        <end position="122"/>
    </location>
</feature>
<reference key="1">
    <citation type="submission" date="2007-04" db="EMBL/GenBank/DDBJ databases">
        <title>Complete sequence of Shewanella putrefaciens CN-32.</title>
        <authorList>
            <consortium name="US DOE Joint Genome Institute"/>
            <person name="Copeland A."/>
            <person name="Lucas S."/>
            <person name="Lapidus A."/>
            <person name="Barry K."/>
            <person name="Detter J.C."/>
            <person name="Glavina del Rio T."/>
            <person name="Hammon N."/>
            <person name="Israni S."/>
            <person name="Dalin E."/>
            <person name="Tice H."/>
            <person name="Pitluck S."/>
            <person name="Chain P."/>
            <person name="Malfatti S."/>
            <person name="Shin M."/>
            <person name="Vergez L."/>
            <person name="Schmutz J."/>
            <person name="Larimer F."/>
            <person name="Land M."/>
            <person name="Hauser L."/>
            <person name="Kyrpides N."/>
            <person name="Mikhailova N."/>
            <person name="Romine M.F."/>
            <person name="Fredrickson J."/>
            <person name="Tiedje J."/>
            <person name="Richardson P."/>
        </authorList>
    </citation>
    <scope>NUCLEOTIDE SEQUENCE [LARGE SCALE GENOMIC DNA]</scope>
    <source>
        <strain>CN-32 / ATCC BAA-453</strain>
    </source>
</reference>
<proteinExistence type="inferred from homology"/>
<dbReference type="EMBL" id="CP000681">
    <property type="protein sequence ID" value="ABP77456.1"/>
    <property type="molecule type" value="Genomic_DNA"/>
</dbReference>
<dbReference type="SMR" id="A4YBX3"/>
<dbReference type="STRING" id="319224.Sputcn32_3749"/>
<dbReference type="KEGG" id="spc:Sputcn32_3749"/>
<dbReference type="eggNOG" id="COG0093">
    <property type="taxonomic scope" value="Bacteria"/>
</dbReference>
<dbReference type="HOGENOM" id="CLU_095071_2_1_6"/>
<dbReference type="GO" id="GO:0022625">
    <property type="term" value="C:cytosolic large ribosomal subunit"/>
    <property type="evidence" value="ECO:0007669"/>
    <property type="project" value="TreeGrafter"/>
</dbReference>
<dbReference type="GO" id="GO:0070180">
    <property type="term" value="F:large ribosomal subunit rRNA binding"/>
    <property type="evidence" value="ECO:0007669"/>
    <property type="project" value="TreeGrafter"/>
</dbReference>
<dbReference type="GO" id="GO:0003735">
    <property type="term" value="F:structural constituent of ribosome"/>
    <property type="evidence" value="ECO:0007669"/>
    <property type="project" value="InterPro"/>
</dbReference>
<dbReference type="GO" id="GO:0006412">
    <property type="term" value="P:translation"/>
    <property type="evidence" value="ECO:0007669"/>
    <property type="project" value="UniProtKB-UniRule"/>
</dbReference>
<dbReference type="CDD" id="cd00337">
    <property type="entry name" value="Ribosomal_uL14"/>
    <property type="match status" value="1"/>
</dbReference>
<dbReference type="FunFam" id="2.40.150.20:FF:000001">
    <property type="entry name" value="50S ribosomal protein L14"/>
    <property type="match status" value="1"/>
</dbReference>
<dbReference type="Gene3D" id="2.40.150.20">
    <property type="entry name" value="Ribosomal protein L14"/>
    <property type="match status" value="1"/>
</dbReference>
<dbReference type="HAMAP" id="MF_01367">
    <property type="entry name" value="Ribosomal_uL14"/>
    <property type="match status" value="1"/>
</dbReference>
<dbReference type="InterPro" id="IPR000218">
    <property type="entry name" value="Ribosomal_uL14"/>
</dbReference>
<dbReference type="InterPro" id="IPR005745">
    <property type="entry name" value="Ribosomal_uL14_bac-type"/>
</dbReference>
<dbReference type="InterPro" id="IPR019972">
    <property type="entry name" value="Ribosomal_uL14_CS"/>
</dbReference>
<dbReference type="InterPro" id="IPR036853">
    <property type="entry name" value="Ribosomal_uL14_sf"/>
</dbReference>
<dbReference type="NCBIfam" id="TIGR01067">
    <property type="entry name" value="rplN_bact"/>
    <property type="match status" value="1"/>
</dbReference>
<dbReference type="PANTHER" id="PTHR11761">
    <property type="entry name" value="50S/60S RIBOSOMAL PROTEIN L14/L23"/>
    <property type="match status" value="1"/>
</dbReference>
<dbReference type="PANTHER" id="PTHR11761:SF3">
    <property type="entry name" value="LARGE RIBOSOMAL SUBUNIT PROTEIN UL14M"/>
    <property type="match status" value="1"/>
</dbReference>
<dbReference type="Pfam" id="PF00238">
    <property type="entry name" value="Ribosomal_L14"/>
    <property type="match status" value="1"/>
</dbReference>
<dbReference type="SMART" id="SM01374">
    <property type="entry name" value="Ribosomal_L14"/>
    <property type="match status" value="1"/>
</dbReference>
<dbReference type="SUPFAM" id="SSF50193">
    <property type="entry name" value="Ribosomal protein L14"/>
    <property type="match status" value="1"/>
</dbReference>
<dbReference type="PROSITE" id="PS00049">
    <property type="entry name" value="RIBOSOMAL_L14"/>
    <property type="match status" value="1"/>
</dbReference>
<accession>A4YBX3</accession>